<protein>
    <recommendedName>
        <fullName evidence="8">Suppressor APC domain-containing protein 2</fullName>
    </recommendedName>
    <alternativeName>
        <fullName>Protein Ang</fullName>
    </alternativeName>
</protein>
<proteinExistence type="evidence at protein level"/>
<evidence type="ECO:0000250" key="1">
    <source>
        <dbReference type="UniProtKB" id="Q86UD0"/>
    </source>
</evidence>
<evidence type="ECO:0000255" key="2"/>
<evidence type="ECO:0000256" key="3">
    <source>
        <dbReference type="SAM" id="MobiDB-lite"/>
    </source>
</evidence>
<evidence type="ECO:0000269" key="4">
    <source>
    </source>
</evidence>
<evidence type="ECO:0000269" key="5">
    <source>
    </source>
</evidence>
<evidence type="ECO:0000303" key="6">
    <source>
    </source>
</evidence>
<evidence type="ECO:0000303" key="7">
    <source>
    </source>
</evidence>
<evidence type="ECO:0000305" key="8"/>
<evidence type="ECO:0000312" key="9">
    <source>
        <dbReference type="MGI" id="MGI:1919330"/>
    </source>
</evidence>
<keyword id="KW-0025">Alternative splicing</keyword>
<keyword id="KW-0131">Cell cycle</keyword>
<keyword id="KW-0132">Cell division</keyword>
<keyword id="KW-0965">Cell junction</keyword>
<keyword id="KW-1003">Cell membrane</keyword>
<keyword id="KW-0175">Coiled coil</keyword>
<keyword id="KW-0963">Cytoplasm</keyword>
<keyword id="KW-0472">Membrane</keyword>
<keyword id="KW-0498">Mitosis</keyword>
<keyword id="KW-0539">Nucleus</keyword>
<keyword id="KW-0597">Phosphoprotein</keyword>
<keyword id="KW-1185">Reference proteome</keyword>
<keyword id="KW-0796">Tight junction</keyword>
<dbReference type="EMBL" id="AB197927">
    <property type="protein sequence ID" value="BAD86554.1"/>
    <property type="molecule type" value="mRNA"/>
</dbReference>
<dbReference type="EMBL" id="AK008577">
    <property type="protein sequence ID" value="BAB25756.1"/>
    <property type="molecule type" value="mRNA"/>
</dbReference>
<dbReference type="EMBL" id="AK163973">
    <property type="protein sequence ID" value="BAE37561.1"/>
    <property type="molecule type" value="mRNA"/>
</dbReference>
<dbReference type="EMBL" id="AK164615">
    <property type="protein sequence ID" value="BAE37847.1"/>
    <property type="molecule type" value="mRNA"/>
</dbReference>
<dbReference type="EMBL" id="AK166625">
    <property type="protein sequence ID" value="BAE38903.1"/>
    <property type="molecule type" value="mRNA"/>
</dbReference>
<dbReference type="EMBL" id="AL732557">
    <property type="status" value="NOT_ANNOTATED_CDS"/>
    <property type="molecule type" value="Genomic_DNA"/>
</dbReference>
<dbReference type="EMBL" id="BC070477">
    <property type="protein sequence ID" value="AAH70477.1"/>
    <property type="status" value="ALT_INIT"/>
    <property type="molecule type" value="mRNA"/>
</dbReference>
<dbReference type="CCDS" id="CCDS38073.1">
    <molecule id="Q9D818-2"/>
</dbReference>
<dbReference type="CCDS" id="CCDS70999.1">
    <molecule id="Q9D818-1"/>
</dbReference>
<dbReference type="RefSeq" id="NP_001074554.1">
    <molecule id="Q9D818-2"/>
    <property type="nucleotide sequence ID" value="NM_001081085.2"/>
</dbReference>
<dbReference type="RefSeq" id="NP_001277336.1">
    <molecule id="Q9D818-1"/>
    <property type="nucleotide sequence ID" value="NM_001290407.1"/>
</dbReference>
<dbReference type="RefSeq" id="XP_006498423.1">
    <molecule id="Q9D818-3"/>
    <property type="nucleotide sequence ID" value="XM_006498360.5"/>
</dbReference>
<dbReference type="SMR" id="Q9D818"/>
<dbReference type="FunCoup" id="Q9D818">
    <property type="interactions" value="331"/>
</dbReference>
<dbReference type="STRING" id="10090.ENSMUSP00000028329"/>
<dbReference type="GlyGen" id="Q9D818">
    <property type="glycosylation" value="1 site, 1 O-linked glycan (1 site)"/>
</dbReference>
<dbReference type="iPTMnet" id="Q9D818"/>
<dbReference type="PhosphoSitePlus" id="Q9D818"/>
<dbReference type="jPOST" id="Q9D818"/>
<dbReference type="PeptideAtlas" id="Q9D818"/>
<dbReference type="ProteomicsDB" id="256593">
    <molecule id="Q9D818-1"/>
</dbReference>
<dbReference type="ProteomicsDB" id="256594">
    <molecule id="Q9D818-2"/>
</dbReference>
<dbReference type="ProteomicsDB" id="256595">
    <molecule id="Q9D818-3"/>
</dbReference>
<dbReference type="Pumba" id="Q9D818"/>
<dbReference type="Antibodypedia" id="52195">
    <property type="antibodies" value="51 antibodies from 13 providers"/>
</dbReference>
<dbReference type="DNASU" id="72080"/>
<dbReference type="Ensembl" id="ENSMUST00000028329.13">
    <molecule id="Q9D818-2"/>
    <property type="protein sequence ID" value="ENSMUSP00000028329.7"/>
    <property type="gene ID" value="ENSMUSG00000026955.14"/>
</dbReference>
<dbReference type="Ensembl" id="ENSMUST00000100323.3">
    <molecule id="Q9D818-3"/>
    <property type="protein sequence ID" value="ENSMUSP00000097898.3"/>
    <property type="gene ID" value="ENSMUSG00000026955.14"/>
</dbReference>
<dbReference type="Ensembl" id="ENSMUST00000114293.9">
    <molecule id="Q9D818-1"/>
    <property type="protein sequence ID" value="ENSMUSP00000109932.3"/>
    <property type="gene ID" value="ENSMUSG00000026955.14"/>
</dbReference>
<dbReference type="GeneID" id="72080"/>
<dbReference type="KEGG" id="mmu:72080"/>
<dbReference type="UCSC" id="uc008irt.2">
    <molecule id="Q9D818-3"/>
    <property type="organism name" value="mouse"/>
</dbReference>
<dbReference type="UCSC" id="uc008iru.2">
    <molecule id="Q9D818-2"/>
    <property type="organism name" value="mouse"/>
</dbReference>
<dbReference type="UCSC" id="uc008irv.2">
    <molecule id="Q9D818-1"/>
    <property type="organism name" value="mouse"/>
</dbReference>
<dbReference type="AGR" id="MGI:1919330"/>
<dbReference type="CTD" id="89958"/>
<dbReference type="MGI" id="MGI:1919330">
    <property type="gene designation" value="Sapcd2"/>
</dbReference>
<dbReference type="VEuPathDB" id="HostDB:ENSMUSG00000026955"/>
<dbReference type="eggNOG" id="ENOG502QUJT">
    <property type="taxonomic scope" value="Eukaryota"/>
</dbReference>
<dbReference type="GeneTree" id="ENSGT00390000008072"/>
<dbReference type="HOGENOM" id="CLU_024930_0_0_1"/>
<dbReference type="InParanoid" id="Q9D818"/>
<dbReference type="OMA" id="WQLNLMA"/>
<dbReference type="OrthoDB" id="10035013at2759"/>
<dbReference type="PhylomeDB" id="Q9D818"/>
<dbReference type="TreeFam" id="TF324086"/>
<dbReference type="BioGRID-ORCS" id="72080">
    <property type="hits" value="5 hits in 80 CRISPR screens"/>
</dbReference>
<dbReference type="ChiTaRS" id="Sapcd2">
    <property type="organism name" value="mouse"/>
</dbReference>
<dbReference type="PRO" id="PR:Q9D818"/>
<dbReference type="Proteomes" id="UP000000589">
    <property type="component" value="Chromosome 2"/>
</dbReference>
<dbReference type="RNAct" id="Q9D818">
    <property type="molecule type" value="protein"/>
</dbReference>
<dbReference type="Bgee" id="ENSMUSG00000026955">
    <property type="expression patterns" value="Expressed in ventricular zone and 126 other cell types or tissues"/>
</dbReference>
<dbReference type="GO" id="GO:0045179">
    <property type="term" value="C:apical cortex"/>
    <property type="evidence" value="ECO:0000314"/>
    <property type="project" value="UniProtKB"/>
</dbReference>
<dbReference type="GO" id="GO:0043296">
    <property type="term" value="C:apical junction complex"/>
    <property type="evidence" value="ECO:0000250"/>
    <property type="project" value="UniProtKB"/>
</dbReference>
<dbReference type="GO" id="GO:0016324">
    <property type="term" value="C:apical plasma membrane"/>
    <property type="evidence" value="ECO:0007669"/>
    <property type="project" value="UniProtKB-SubCell"/>
</dbReference>
<dbReference type="GO" id="GO:0005923">
    <property type="term" value="C:bicellular tight junction"/>
    <property type="evidence" value="ECO:0007669"/>
    <property type="project" value="UniProtKB-SubCell"/>
</dbReference>
<dbReference type="GO" id="GO:0005829">
    <property type="term" value="C:cytosol"/>
    <property type="evidence" value="ECO:0007669"/>
    <property type="project" value="Ensembl"/>
</dbReference>
<dbReference type="GO" id="GO:0005730">
    <property type="term" value="C:nucleolus"/>
    <property type="evidence" value="ECO:0007669"/>
    <property type="project" value="Ensembl"/>
</dbReference>
<dbReference type="GO" id="GO:0005654">
    <property type="term" value="C:nucleoplasm"/>
    <property type="evidence" value="ECO:0007669"/>
    <property type="project" value="Ensembl"/>
</dbReference>
<dbReference type="GO" id="GO:0000132">
    <property type="term" value="P:establishment of mitotic spindle orientation"/>
    <property type="evidence" value="ECO:0000315"/>
    <property type="project" value="UniProtKB"/>
</dbReference>
<dbReference type="GO" id="GO:1904777">
    <property type="term" value="P:negative regulation of protein localization to cell cortex"/>
    <property type="evidence" value="ECO:0000250"/>
    <property type="project" value="UniProtKB"/>
</dbReference>
<dbReference type="GO" id="GO:0008284">
    <property type="term" value="P:positive regulation of cell population proliferation"/>
    <property type="evidence" value="ECO:0000250"/>
    <property type="project" value="UniProtKB"/>
</dbReference>
<dbReference type="GO" id="GO:0090175">
    <property type="term" value="P:regulation of establishment of planar polarity"/>
    <property type="evidence" value="ECO:0000315"/>
    <property type="project" value="UniProtKB"/>
</dbReference>
<dbReference type="GO" id="GO:0098725">
    <property type="term" value="P:symmetric cell division"/>
    <property type="evidence" value="ECO:0000315"/>
    <property type="project" value="UniProtKB"/>
</dbReference>
<dbReference type="InterPro" id="IPR026828">
    <property type="entry name" value="Suppressor_APCD_1/2"/>
</dbReference>
<dbReference type="PANTHER" id="PTHR14907">
    <property type="entry name" value="FI14130P"/>
    <property type="match status" value="1"/>
</dbReference>
<dbReference type="PANTHER" id="PTHR14907:SF3">
    <property type="entry name" value="SUPPRESSOR APC DOMAIN-CONTAINING PROTEIN 2"/>
    <property type="match status" value="1"/>
</dbReference>
<dbReference type="Pfam" id="PF11414">
    <property type="entry name" value="Suppressor_APC"/>
    <property type="match status" value="1"/>
</dbReference>
<accession>Q9D818</accession>
<accession>A2AJ17</accession>
<accession>Q3TL89</accession>
<accession>Q3TP90</accession>
<accession>Q3TQ24</accession>
<accession>Q6NS42</accession>
<comment type="function">
    <text evidence="1 5">Plays a role in planar mitotic spindle orientation in retinal progenitor cells (RPCs) and promotes the production of symmetric terminal divisions (PubMed:26766442). Negatively regulates the mitotic apical cortex localization of GPSM2 (By similarity). Involved also in positive regulation of cell proliferation and tumor cell growth (By similarity).</text>
</comment>
<comment type="subunit">
    <text evidence="1">Interacts with a spindle orientation complex at least composed of GNAI1, GPSM2 and NUMA1. Interacts with GPSM2 (via TPR motifs); this interaction is required to prevent GPSM2 anchoring at the mitotic apical cortex and is inhibited in presence of NUMA1 in a dose dependent manner. Interacts with PARD3.</text>
</comment>
<comment type="subcellular location">
    <subcellularLocation>
        <location evidence="1">Cytoplasm</location>
    </subcellularLocation>
    <subcellularLocation>
        <location evidence="1">Nucleus</location>
    </subcellularLocation>
    <subcellularLocation>
        <location evidence="1">Cytoplasm</location>
        <location evidence="1">Cell cortex</location>
    </subcellularLocation>
    <subcellularLocation>
        <location evidence="5">Apical cell membrane</location>
    </subcellularLocation>
    <subcellularLocation>
        <location evidence="1">Cell junction</location>
        <location evidence="1">Tight junction</location>
    </subcellularLocation>
    <text evidence="5">Localized at the apical membrane during the M phase (PubMed:26766442). In horizontally retinal progenitor dividing cells, localized at the pole cortical region from prophase to telophase cells (PubMed:26766442). In vertically retinal progenitor dividing cells, not detected at the pole cortical region at any stage of mitosis (PubMed:26766442).</text>
</comment>
<comment type="alternative products">
    <event type="alternative splicing"/>
    <isoform>
        <id>Q9D818-1</id>
        <name>1</name>
        <sequence type="displayed"/>
    </isoform>
    <isoform>
        <id>Q9D818-2</id>
        <name>2</name>
        <sequence type="described" ref="VSP_025112"/>
    </isoform>
    <isoform>
        <id>Q9D818-3</id>
        <name>3</name>
        <sequence type="described" ref="VSP_025113"/>
    </isoform>
</comment>
<comment type="tissue specificity">
    <text evidence="5">Expressed in the retina (PubMed:26766442). Expressed in retinal progenitor cells and newly differentiated neurons but not in mature retinal cells (at protein level) (PubMed:26766442).</text>
</comment>
<comment type="developmental stage">
    <text evidence="4 5">Expressed in the embryonic retina from 14 to 17 dpc (at protein level) (PubMed:26766442). Expressed throughout neuroectoderm at 7.5 dpc (PubMed:15567712). The expression increases in rostral brain and caudal neuropore regions and decreases in hindbrain and spinal cord regions (PubMed:15567712). At 12.5 dpc the expression is found in undifferentiated neuroepithelium in ventricular zone, dorsal root ganglia and several non-neural tissues (PubMed:15567712).</text>
</comment>
<comment type="sequence caution" evidence="8">
    <conflict type="erroneous initiation">
        <sequence resource="EMBL-CDS" id="AAH70477"/>
    </conflict>
    <text>Truncated N-terminus.</text>
</comment>
<sequence>MAVAAMAERGRLSHAAPAPSTEGLPRAFLQSLRTLFDILDDRQRGYVHLREIESRWQGADARELPCGVLEGLRQVAPANGYLTFERFVAGLRTSLLKADGGQRDQARVAARPGDQSSLQQRLMFAPADEPRTVLERKPLPLSACPASGGPSGTSRNPELLCVPVEAASCPTETERPLSKALEQIPSADLGAAACKTLGKGTGEARQAPRARGERRRHTITNGVDCSLLKQMKELDQEQEVLLQGLEMMARGRDWYQQQLQRVQERQRRLSQSRAAADFGAEGSPRPLGRLLPKVQEVARCLGELLTAACSGRALPSSSLGPLGPPSPSTPVWQQQTILMLKEQNRLLTQEVTDKSERITQLEQEKSALIKQLFEARALSQQDSGPLDSTFI</sequence>
<name>SAPC2_MOUSE</name>
<reference key="1">
    <citation type="journal article" date="2004" name="Gene Expr. Patterns">
        <title>Ang is a novel gene expressed in early neuroectoderm, but its null mutant exhibits no obvious phenotype.</title>
        <authorList>
            <person name="Murata T."/>
            <person name="Furushima K."/>
            <person name="Hirano M."/>
            <person name="Kiyonari H."/>
            <person name="Nakamura M."/>
            <person name="Suda Y."/>
            <person name="Aizawa S."/>
        </authorList>
    </citation>
    <scope>NUCLEOTIDE SEQUENCE [MRNA] (ISOFORM 1)</scope>
    <scope>DEVELOPMENTAL STAGE</scope>
    <source>
        <strain>C57BL/6J</strain>
    </source>
</reference>
<reference key="2">
    <citation type="journal article" date="2005" name="Science">
        <title>The transcriptional landscape of the mammalian genome.</title>
        <authorList>
            <person name="Carninci P."/>
            <person name="Kasukawa T."/>
            <person name="Katayama S."/>
            <person name="Gough J."/>
            <person name="Frith M.C."/>
            <person name="Maeda N."/>
            <person name="Oyama R."/>
            <person name="Ravasi T."/>
            <person name="Lenhard B."/>
            <person name="Wells C."/>
            <person name="Kodzius R."/>
            <person name="Shimokawa K."/>
            <person name="Bajic V.B."/>
            <person name="Brenner S.E."/>
            <person name="Batalov S."/>
            <person name="Forrest A.R."/>
            <person name="Zavolan M."/>
            <person name="Davis M.J."/>
            <person name="Wilming L.G."/>
            <person name="Aidinis V."/>
            <person name="Allen J.E."/>
            <person name="Ambesi-Impiombato A."/>
            <person name="Apweiler R."/>
            <person name="Aturaliya R.N."/>
            <person name="Bailey T.L."/>
            <person name="Bansal M."/>
            <person name="Baxter L."/>
            <person name="Beisel K.W."/>
            <person name="Bersano T."/>
            <person name="Bono H."/>
            <person name="Chalk A.M."/>
            <person name="Chiu K.P."/>
            <person name="Choudhary V."/>
            <person name="Christoffels A."/>
            <person name="Clutterbuck D.R."/>
            <person name="Crowe M.L."/>
            <person name="Dalla E."/>
            <person name="Dalrymple B.P."/>
            <person name="de Bono B."/>
            <person name="Della Gatta G."/>
            <person name="di Bernardo D."/>
            <person name="Down T."/>
            <person name="Engstrom P."/>
            <person name="Fagiolini M."/>
            <person name="Faulkner G."/>
            <person name="Fletcher C.F."/>
            <person name="Fukushima T."/>
            <person name="Furuno M."/>
            <person name="Futaki S."/>
            <person name="Gariboldi M."/>
            <person name="Georgii-Hemming P."/>
            <person name="Gingeras T.R."/>
            <person name="Gojobori T."/>
            <person name="Green R.E."/>
            <person name="Gustincich S."/>
            <person name="Harbers M."/>
            <person name="Hayashi Y."/>
            <person name="Hensch T.K."/>
            <person name="Hirokawa N."/>
            <person name="Hill D."/>
            <person name="Huminiecki L."/>
            <person name="Iacono M."/>
            <person name="Ikeo K."/>
            <person name="Iwama A."/>
            <person name="Ishikawa T."/>
            <person name="Jakt M."/>
            <person name="Kanapin A."/>
            <person name="Katoh M."/>
            <person name="Kawasawa Y."/>
            <person name="Kelso J."/>
            <person name="Kitamura H."/>
            <person name="Kitano H."/>
            <person name="Kollias G."/>
            <person name="Krishnan S.P."/>
            <person name="Kruger A."/>
            <person name="Kummerfeld S.K."/>
            <person name="Kurochkin I.V."/>
            <person name="Lareau L.F."/>
            <person name="Lazarevic D."/>
            <person name="Lipovich L."/>
            <person name="Liu J."/>
            <person name="Liuni S."/>
            <person name="McWilliam S."/>
            <person name="Madan Babu M."/>
            <person name="Madera M."/>
            <person name="Marchionni L."/>
            <person name="Matsuda H."/>
            <person name="Matsuzawa S."/>
            <person name="Miki H."/>
            <person name="Mignone F."/>
            <person name="Miyake S."/>
            <person name="Morris K."/>
            <person name="Mottagui-Tabar S."/>
            <person name="Mulder N."/>
            <person name="Nakano N."/>
            <person name="Nakauchi H."/>
            <person name="Ng P."/>
            <person name="Nilsson R."/>
            <person name="Nishiguchi S."/>
            <person name="Nishikawa S."/>
            <person name="Nori F."/>
            <person name="Ohara O."/>
            <person name="Okazaki Y."/>
            <person name="Orlando V."/>
            <person name="Pang K.C."/>
            <person name="Pavan W.J."/>
            <person name="Pavesi G."/>
            <person name="Pesole G."/>
            <person name="Petrovsky N."/>
            <person name="Piazza S."/>
            <person name="Reed J."/>
            <person name="Reid J.F."/>
            <person name="Ring B.Z."/>
            <person name="Ringwald M."/>
            <person name="Rost B."/>
            <person name="Ruan Y."/>
            <person name="Salzberg S.L."/>
            <person name="Sandelin A."/>
            <person name="Schneider C."/>
            <person name="Schoenbach C."/>
            <person name="Sekiguchi K."/>
            <person name="Semple C.A."/>
            <person name="Seno S."/>
            <person name="Sessa L."/>
            <person name="Sheng Y."/>
            <person name="Shibata Y."/>
            <person name="Shimada H."/>
            <person name="Shimada K."/>
            <person name="Silva D."/>
            <person name="Sinclair B."/>
            <person name="Sperling S."/>
            <person name="Stupka E."/>
            <person name="Sugiura K."/>
            <person name="Sultana R."/>
            <person name="Takenaka Y."/>
            <person name="Taki K."/>
            <person name="Tammoja K."/>
            <person name="Tan S.L."/>
            <person name="Tang S."/>
            <person name="Taylor M.S."/>
            <person name="Tegner J."/>
            <person name="Teichmann S.A."/>
            <person name="Ueda H.R."/>
            <person name="van Nimwegen E."/>
            <person name="Verardo R."/>
            <person name="Wei C.L."/>
            <person name="Yagi K."/>
            <person name="Yamanishi H."/>
            <person name="Zabarovsky E."/>
            <person name="Zhu S."/>
            <person name="Zimmer A."/>
            <person name="Hide W."/>
            <person name="Bult C."/>
            <person name="Grimmond S.M."/>
            <person name="Teasdale R.D."/>
            <person name="Liu E.T."/>
            <person name="Brusic V."/>
            <person name="Quackenbush J."/>
            <person name="Wahlestedt C."/>
            <person name="Mattick J.S."/>
            <person name="Hume D.A."/>
            <person name="Kai C."/>
            <person name="Sasaki D."/>
            <person name="Tomaru Y."/>
            <person name="Fukuda S."/>
            <person name="Kanamori-Katayama M."/>
            <person name="Suzuki M."/>
            <person name="Aoki J."/>
            <person name="Arakawa T."/>
            <person name="Iida J."/>
            <person name="Imamura K."/>
            <person name="Itoh M."/>
            <person name="Kato T."/>
            <person name="Kawaji H."/>
            <person name="Kawagashira N."/>
            <person name="Kawashima T."/>
            <person name="Kojima M."/>
            <person name="Kondo S."/>
            <person name="Konno H."/>
            <person name="Nakano K."/>
            <person name="Ninomiya N."/>
            <person name="Nishio T."/>
            <person name="Okada M."/>
            <person name="Plessy C."/>
            <person name="Shibata K."/>
            <person name="Shiraki T."/>
            <person name="Suzuki S."/>
            <person name="Tagami M."/>
            <person name="Waki K."/>
            <person name="Watahiki A."/>
            <person name="Okamura-Oho Y."/>
            <person name="Suzuki H."/>
            <person name="Kawai J."/>
            <person name="Hayashizaki Y."/>
        </authorList>
    </citation>
    <scope>NUCLEOTIDE SEQUENCE [LARGE SCALE MRNA] (ISOFORMS 1 AND 2)</scope>
    <source>
        <strain>C57BL/6J</strain>
        <tissue>Lung</tissue>
        <tissue>Small intestine</tissue>
    </source>
</reference>
<reference key="3">
    <citation type="journal article" date="2009" name="PLoS Biol.">
        <title>Lineage-specific biology revealed by a finished genome assembly of the mouse.</title>
        <authorList>
            <person name="Church D.M."/>
            <person name="Goodstadt L."/>
            <person name="Hillier L.W."/>
            <person name="Zody M.C."/>
            <person name="Goldstein S."/>
            <person name="She X."/>
            <person name="Bult C.J."/>
            <person name="Agarwala R."/>
            <person name="Cherry J.L."/>
            <person name="DiCuccio M."/>
            <person name="Hlavina W."/>
            <person name="Kapustin Y."/>
            <person name="Meric P."/>
            <person name="Maglott D."/>
            <person name="Birtle Z."/>
            <person name="Marques A.C."/>
            <person name="Graves T."/>
            <person name="Zhou S."/>
            <person name="Teague B."/>
            <person name="Potamousis K."/>
            <person name="Churas C."/>
            <person name="Place M."/>
            <person name="Herschleb J."/>
            <person name="Runnheim R."/>
            <person name="Forrest D."/>
            <person name="Amos-Landgraf J."/>
            <person name="Schwartz D.C."/>
            <person name="Cheng Z."/>
            <person name="Lindblad-Toh K."/>
            <person name="Eichler E.E."/>
            <person name="Ponting C.P."/>
        </authorList>
    </citation>
    <scope>NUCLEOTIDE SEQUENCE [LARGE SCALE GENOMIC DNA]</scope>
    <source>
        <strain>C57BL/6J</strain>
    </source>
</reference>
<reference key="4">
    <citation type="journal article" date="2004" name="Genome Res.">
        <title>The status, quality, and expansion of the NIH full-length cDNA project: the Mammalian Gene Collection (MGC).</title>
        <authorList>
            <consortium name="The MGC Project Team"/>
        </authorList>
    </citation>
    <scope>NUCLEOTIDE SEQUENCE [LARGE SCALE MRNA] (ISOFORM 3)</scope>
    <source>
        <strain>C57BL/6J</strain>
        <tissue>Eye</tissue>
    </source>
</reference>
<reference key="5">
    <citation type="journal article" date="2016" name="Dev. Cell">
        <title>SAPCD2 controls spindle orientation and asymmetric divisions by negatively regulating the Galphai-LGN-NuMA ternary complex.</title>
        <authorList>
            <person name="Chiu C.W."/>
            <person name="Monat C."/>
            <person name="Robitaille M."/>
            <person name="Lacomme M."/>
            <person name="Daulat A.M."/>
            <person name="Macleod G."/>
            <person name="McNeill H."/>
            <person name="Cayouette M."/>
            <person name="Angers S."/>
        </authorList>
    </citation>
    <scope>FUNCTION</scope>
    <scope>SUBCELLULAR LOCATION</scope>
    <scope>TISSUE SPECIFICITY</scope>
    <scope>DEVELOPMENTAL STAGE</scope>
</reference>
<organism>
    <name type="scientific">Mus musculus</name>
    <name type="common">Mouse</name>
    <dbReference type="NCBI Taxonomy" id="10090"/>
    <lineage>
        <taxon>Eukaryota</taxon>
        <taxon>Metazoa</taxon>
        <taxon>Chordata</taxon>
        <taxon>Craniata</taxon>
        <taxon>Vertebrata</taxon>
        <taxon>Euteleostomi</taxon>
        <taxon>Mammalia</taxon>
        <taxon>Eutheria</taxon>
        <taxon>Euarchontoglires</taxon>
        <taxon>Glires</taxon>
        <taxon>Rodentia</taxon>
        <taxon>Myomorpha</taxon>
        <taxon>Muroidea</taxon>
        <taxon>Muridae</taxon>
        <taxon>Murinae</taxon>
        <taxon>Mus</taxon>
        <taxon>Mus</taxon>
    </lineage>
</organism>
<gene>
    <name evidence="9" type="primary">Sapcd2</name>
</gene>
<feature type="chain" id="PRO_0000286597" description="Suppressor APC domain-containing protein 2">
    <location>
        <begin position="1"/>
        <end position="391"/>
    </location>
</feature>
<feature type="region of interest" description="Disordered" evidence="3">
    <location>
        <begin position="1"/>
        <end position="20"/>
    </location>
</feature>
<feature type="coiled-coil region" evidence="2">
    <location>
        <begin position="226"/>
        <end position="277"/>
    </location>
</feature>
<feature type="coiled-coil region" evidence="2">
    <location>
        <begin position="340"/>
        <end position="381"/>
    </location>
</feature>
<feature type="modified residue" description="Phosphothreonine" evidence="1">
    <location>
        <position position="218"/>
    </location>
</feature>
<feature type="modified residue" description="Phosphoserine" evidence="1">
    <location>
        <position position="283"/>
    </location>
</feature>
<feature type="splice variant" id="VSP_025112" description="In isoform 2." evidence="7">
    <original>L</original>
    <variation>LGSSQCDTLQRQPGLLLHPGGRGGSTGAPSTSAEE</variation>
    <location>
        <position position="189"/>
    </location>
</feature>
<feature type="splice variant" id="VSP_025113" description="In isoform 3." evidence="6">
    <original>ALPSSSLGPLGPPSPSTPVWQQQTILMLKEQNRLLT</original>
    <variation>VSALEAAWHPLSLFWMLCQERSGSLCTSTGSAFVLFRAPGPSLTLNSSLAATDHPHAERTEPASHSGEVWEDGAGAGGPANPDRLPACSPA</variation>
    <location>
        <begin position="313"/>
        <end position="348"/>
    </location>
</feature>
<feature type="sequence conflict" description="In Ref. 2; BAE38903." evidence="8" ref="2">
    <original>A</original>
    <variation>T</variation>
    <location>
        <position position="367"/>
    </location>
</feature>